<gene>
    <name evidence="6" type="primary">Fer2LCH</name>
    <name type="ordered locus">LOC113505693</name>
</gene>
<sequence length="231" mass="26236">MKMLILAVSCLLAITGSLAADTCYNDVALDCGITSNSLALPRCNAVYGEYGSHGNVATELQAYAKLHLERSYDYLLSAAYFNNYQTNRAGFSKLFKKLSDEAWSKTIDIIKHVTKRGDKMNFDQHSTMKTERKNYTAENHELEALAKALDTQKELAERAFYIHREATRNSQHLHDPEIAQYLEEEFIEDHAEKIRTLAGHTSDLKKFITANNGHDLSLALYVFDEYLQKTV</sequence>
<protein>
    <recommendedName>
        <fullName evidence="6">Ferritin light chain</fullName>
    </recommendedName>
</protein>
<proteinExistence type="evidence at protein level"/>
<accession>A0A7E5WUT2</accession>
<accession>Q52SA8</accession>
<reference evidence="9" key="1">
    <citation type="journal article" date="2018" name="Elife">
        <title>The genome of the Hi5 germ cell line from Trichoplusia ni, an agricultural pest and novel model for small RNA biology.</title>
        <authorList>
            <person name="Fu Y."/>
            <person name="Yang Y."/>
            <person name="Zhang H."/>
            <person name="Farley G."/>
            <person name="Wang J."/>
            <person name="Quarles K.A."/>
            <person name="Weng Z."/>
            <person name="Zamore P.D."/>
        </authorList>
    </citation>
    <scope>NUCLEOTIDE SEQUENCE [LARGE SCALE GENOMIC DNA]</scope>
</reference>
<reference evidence="8 10" key="2">
    <citation type="journal article" date="2005" name="J. Mol. Biol.">
        <title>Crystal structure of a secreted insect ferritin reveals a symmetrical arrangement of heavy and light chains.</title>
        <authorList>
            <person name="Hamburger A.E."/>
            <person name="West A.P."/>
            <person name="Hamburger Z.A."/>
            <person name="Hamburger P."/>
            <person name="Bjorkman P.J."/>
        </authorList>
    </citation>
    <scope>NUCLEOTIDE SEQUENCE [MRNA] OF 32-231</scope>
    <scope>PROTEIN SEQUENCE OF 20-31</scope>
    <scope>X-RAY CRYSTALLOGRAPHY (1.91 ANGSTROMS) OF 20-231 IN COMPLEX WITH FER1HCH</scope>
    <scope>FUNCTION</scope>
    <scope>SUBUNIT</scope>
    <scope>SUBCELLULAR LOCATION</scope>
    <scope>DISULFIDE BONDS</scope>
</reference>
<evidence type="ECO:0000250" key="1">
    <source>
        <dbReference type="UniProtKB" id="Q9VA83"/>
    </source>
</evidence>
<evidence type="ECO:0000255" key="2">
    <source>
        <dbReference type="PROSITE-ProRule" id="PRU00085"/>
    </source>
</evidence>
<evidence type="ECO:0000255" key="3">
    <source>
        <dbReference type="PROSITE-ProRule" id="PRU00498"/>
    </source>
</evidence>
<evidence type="ECO:0000255" key="4">
    <source>
        <dbReference type="RuleBase" id="RU361145"/>
    </source>
</evidence>
<evidence type="ECO:0000269" key="5">
    <source>
    </source>
</evidence>
<evidence type="ECO:0000303" key="6">
    <source>
    </source>
</evidence>
<evidence type="ECO:0000305" key="7">
    <source>
    </source>
</evidence>
<evidence type="ECO:0000312" key="8">
    <source>
        <dbReference type="EMBL" id="AAX94729.1"/>
    </source>
</evidence>
<evidence type="ECO:0000312" key="9">
    <source>
        <dbReference type="Proteomes" id="UP000322000"/>
    </source>
</evidence>
<evidence type="ECO:0007744" key="10">
    <source>
        <dbReference type="PDB" id="1Z6O"/>
    </source>
</evidence>
<evidence type="ECO:0007829" key="11">
    <source>
        <dbReference type="PDB" id="1Z6O"/>
    </source>
</evidence>
<dbReference type="EMBL" id="AY970292">
    <property type="protein sequence ID" value="AAX94729.1"/>
    <property type="molecule type" value="mRNA"/>
</dbReference>
<dbReference type="PDB" id="1Z6O">
    <property type="method" value="X-ray"/>
    <property type="resolution" value="1.91 A"/>
    <property type="chains" value="A/B/C/D/E/F/G/H/I/J/K/L=20-231"/>
</dbReference>
<dbReference type="PDBsum" id="1Z6O"/>
<dbReference type="SMR" id="A0A7E5WUT2"/>
<dbReference type="FunCoup" id="A0A7E5WUT2">
    <property type="interactions" value="27"/>
</dbReference>
<dbReference type="InParanoid" id="A0A7E5WUT2"/>
<dbReference type="OrthoDB" id="6363126at2759"/>
<dbReference type="EvolutionaryTrace" id="A0A7E5WUT2"/>
<dbReference type="Proteomes" id="UP000322000">
    <property type="component" value="Unplaced"/>
</dbReference>
<dbReference type="GO" id="GO:0005576">
    <property type="term" value="C:extracellular region"/>
    <property type="evidence" value="ECO:0007669"/>
    <property type="project" value="UniProtKB-SubCell"/>
</dbReference>
<dbReference type="GO" id="GO:0005794">
    <property type="term" value="C:Golgi apparatus"/>
    <property type="evidence" value="ECO:0007669"/>
    <property type="project" value="UniProtKB-SubCell"/>
</dbReference>
<dbReference type="GO" id="GO:0008199">
    <property type="term" value="F:ferric iron binding"/>
    <property type="evidence" value="ECO:0007669"/>
    <property type="project" value="InterPro"/>
</dbReference>
<dbReference type="GO" id="GO:0008198">
    <property type="term" value="F:ferrous iron binding"/>
    <property type="evidence" value="ECO:0007669"/>
    <property type="project" value="TreeGrafter"/>
</dbReference>
<dbReference type="GO" id="GO:0004322">
    <property type="term" value="F:ferroxidase activity"/>
    <property type="evidence" value="ECO:0007669"/>
    <property type="project" value="UniProtKB-EC"/>
</dbReference>
<dbReference type="GO" id="GO:0006879">
    <property type="term" value="P:intracellular iron ion homeostasis"/>
    <property type="evidence" value="ECO:0007669"/>
    <property type="project" value="UniProtKB-KW"/>
</dbReference>
<dbReference type="GO" id="GO:0006826">
    <property type="term" value="P:iron ion transport"/>
    <property type="evidence" value="ECO:0007669"/>
    <property type="project" value="InterPro"/>
</dbReference>
<dbReference type="CDD" id="cd01056">
    <property type="entry name" value="Euk_Ferritin"/>
    <property type="match status" value="1"/>
</dbReference>
<dbReference type="Gene3D" id="1.20.1260.10">
    <property type="match status" value="1"/>
</dbReference>
<dbReference type="InterPro" id="IPR001519">
    <property type="entry name" value="Ferritin"/>
</dbReference>
<dbReference type="InterPro" id="IPR012347">
    <property type="entry name" value="Ferritin-like"/>
</dbReference>
<dbReference type="InterPro" id="IPR009040">
    <property type="entry name" value="Ferritin-like_diiron"/>
</dbReference>
<dbReference type="InterPro" id="IPR009078">
    <property type="entry name" value="Ferritin-like_SF"/>
</dbReference>
<dbReference type="InterPro" id="IPR008331">
    <property type="entry name" value="Ferritin_DPS_dom"/>
</dbReference>
<dbReference type="PANTHER" id="PTHR11431">
    <property type="entry name" value="FERRITIN"/>
    <property type="match status" value="1"/>
</dbReference>
<dbReference type="PANTHER" id="PTHR11431:SF51">
    <property type="entry name" value="FERRITIN"/>
    <property type="match status" value="1"/>
</dbReference>
<dbReference type="Pfam" id="PF00210">
    <property type="entry name" value="Ferritin"/>
    <property type="match status" value="1"/>
</dbReference>
<dbReference type="SUPFAM" id="SSF47240">
    <property type="entry name" value="Ferritin-like"/>
    <property type="match status" value="1"/>
</dbReference>
<dbReference type="PROSITE" id="PS50905">
    <property type="entry name" value="FERRITIN_LIKE"/>
    <property type="match status" value="1"/>
</dbReference>
<keyword id="KW-0002">3D-structure</keyword>
<keyword id="KW-0903">Direct protein sequencing</keyword>
<keyword id="KW-1015">Disulfide bond</keyword>
<keyword id="KW-0325">Glycoprotein</keyword>
<keyword id="KW-0333">Golgi apparatus</keyword>
<keyword id="KW-0408">Iron</keyword>
<keyword id="KW-0409">Iron storage</keyword>
<keyword id="KW-0479">Metal-binding</keyword>
<keyword id="KW-1185">Reference proteome</keyword>
<keyword id="KW-0964">Secreted</keyword>
<keyword id="KW-0732">Signal</keyword>
<organism evidence="9">
    <name type="scientific">Trichoplusia ni</name>
    <name type="common">Cabbage looper</name>
    <dbReference type="NCBI Taxonomy" id="7111"/>
    <lineage>
        <taxon>Eukaryota</taxon>
        <taxon>Metazoa</taxon>
        <taxon>Ecdysozoa</taxon>
        <taxon>Arthropoda</taxon>
        <taxon>Hexapoda</taxon>
        <taxon>Insecta</taxon>
        <taxon>Pterygota</taxon>
        <taxon>Neoptera</taxon>
        <taxon>Endopterygota</taxon>
        <taxon>Lepidoptera</taxon>
        <taxon>Glossata</taxon>
        <taxon>Ditrysia</taxon>
        <taxon>Noctuoidea</taxon>
        <taxon>Noctuidae</taxon>
        <taxon>Plusiinae</taxon>
        <taxon>Trichoplusia</taxon>
    </lineage>
</organism>
<comment type="function">
    <text evidence="4 7">Stores iron in a soluble, non-toxic, readily available form. Important for iron homeostasis. Iron is taken up in the ferrous form and deposited as ferric hydroxides after oxidation (By similarity). Ferritin is composed of a heavy (H) chain which is responsible for the oxidation and uptake of ferrous iron, and a light (L) chain which facilitates the nucleation of the ferrihydrite iron core (Probable).</text>
</comment>
<comment type="subunit">
    <text evidence="5">Oligomer of 12 light (L) chains and 12 heavy (H) chains; L and H chains are disulfide-linked (PubMed:15896348). The functional molecule forms a roughly spherical shell with a diameter of 12 nm and contains a central cavity into which the insoluble ferric iron core is deposited (PubMed:15896348).</text>
</comment>
<comment type="subcellular location">
    <subcellularLocation>
        <location evidence="1">Golgi apparatus</location>
    </subcellularLocation>
    <subcellularLocation>
        <location evidence="5">Secreted</location>
    </subcellularLocation>
</comment>
<comment type="similarity">
    <text evidence="4">Belongs to the ferritin family.</text>
</comment>
<feature type="signal peptide" evidence="5">
    <location>
        <begin position="1"/>
        <end position="19"/>
    </location>
</feature>
<feature type="chain" id="PRO_5028983309" description="Ferritin light chain">
    <location>
        <begin position="20"/>
        <end position="231"/>
    </location>
</feature>
<feature type="domain" description="Ferritin-like diiron" evidence="2">
    <location>
        <begin position="50"/>
        <end position="208"/>
    </location>
</feature>
<feature type="glycosylation site" description="N-linked (GlcNAc...) asparagine" evidence="3">
    <location>
        <position position="134"/>
    </location>
</feature>
<feature type="disulfide bond" evidence="5 10">
    <location>
        <begin position="23"/>
        <end position="43"/>
    </location>
</feature>
<feature type="disulfide bond" description="Interchain (with C-23 in heavy chain)" evidence="5 10">
    <location>
        <position position="31"/>
    </location>
</feature>
<feature type="helix" evidence="11">
    <location>
        <begin position="23"/>
        <end position="30"/>
    </location>
</feature>
<feature type="turn" evidence="11">
    <location>
        <begin position="48"/>
        <end position="52"/>
    </location>
</feature>
<feature type="strand" evidence="11">
    <location>
        <begin position="53"/>
        <end position="55"/>
    </location>
</feature>
<feature type="helix" evidence="11">
    <location>
        <begin position="56"/>
        <end position="80"/>
    </location>
</feature>
<feature type="turn" evidence="11">
    <location>
        <begin position="84"/>
        <end position="86"/>
    </location>
</feature>
<feature type="helix" evidence="11">
    <location>
        <begin position="89"/>
        <end position="115"/>
    </location>
</feature>
<feature type="helix" evidence="11">
    <location>
        <begin position="141"/>
        <end position="167"/>
    </location>
</feature>
<feature type="helix" evidence="11">
    <location>
        <begin position="176"/>
        <end position="185"/>
    </location>
</feature>
<feature type="helix" evidence="11">
    <location>
        <begin position="187"/>
        <end position="209"/>
    </location>
</feature>
<feature type="helix" evidence="11">
    <location>
        <begin position="210"/>
        <end position="213"/>
    </location>
</feature>
<feature type="helix" evidence="11">
    <location>
        <begin position="216"/>
        <end position="230"/>
    </location>
</feature>
<name>FRIL_TRINI</name>